<keyword id="KW-0159">Chromosome partition</keyword>
<keyword id="KW-0539">Nucleus</keyword>
<keyword id="KW-1185">Reference proteome</keyword>
<keyword id="KW-0677">Repeat</keyword>
<keyword id="KW-0802">TPR repeat</keyword>
<keyword id="KW-0804">Transcription</keyword>
<keyword id="KW-0805">Transcription regulation</keyword>
<organism>
    <name type="scientific">Schizosaccharomyces pombe (strain 972 / ATCC 24843)</name>
    <name type="common">Fission yeast</name>
    <dbReference type="NCBI Taxonomy" id="284812"/>
    <lineage>
        <taxon>Eukaryota</taxon>
        <taxon>Fungi</taxon>
        <taxon>Dikarya</taxon>
        <taxon>Ascomycota</taxon>
        <taxon>Taphrinomycotina</taxon>
        <taxon>Schizosaccharomycetes</taxon>
        <taxon>Schizosaccharomycetales</taxon>
        <taxon>Schizosaccharomycetaceae</taxon>
        <taxon>Schizosaccharomyces</taxon>
    </lineage>
</organism>
<comment type="function">
    <text evidence="2">Has a role in a nucleosome assembly pathway that is required for the integrity of heterochromatin and proper chromosome segregation. Required for transcriptional silencing in the outer repeat (otr) region of centromeric repeats and the Tf2 long terminal repeat retrotransposons.</text>
</comment>
<comment type="subunit">
    <text evidence="2">Interacts with hip1 and slm9.</text>
</comment>
<comment type="interaction">
    <interactant intactId="EBI-1556159">
        <id>P87315</id>
    </interactant>
    <interactant intactId="EBI-1556094">
        <id>P87314</id>
        <label>hip1</label>
    </interactant>
    <organismsDiffer>false</organismsDiffer>
    <experiments>2</experiments>
</comment>
<comment type="interaction">
    <interactant intactId="EBI-1556159">
        <id>P87315</id>
    </interactant>
    <interactant intactId="EBI-1556117">
        <id>O74309</id>
        <label>slm9</label>
    </interactant>
    <organismsDiffer>false</organismsDiffer>
    <experiments>3</experiments>
</comment>
<comment type="subcellular location">
    <subcellularLocation>
        <location evidence="3">Nucleus</location>
    </subcellularLocation>
</comment>
<comment type="similarity">
    <text evidence="4">Belongs to the HIR3 family.</text>
</comment>
<gene>
    <name type="primary">hip3</name>
    <name type="synonym">hir3</name>
    <name type="ORF">SPBC31F10.14c</name>
</gene>
<sequence>MATFTPLNAASEDLDKEKRTLEIRIEEAVQIYQNALSAQKQGDDNAATKYYDELLNVRILRELPFTVNSNYKKNNALLLLHYLTRKNHGLFLLSKLQSLLSLDPSTDPIPVYRDALLDFAIALACDYNDIELWSFVAELAEKLEMPRIQRFALESSFYTGYEPFDAERVFTNIDDLNPGKLISLQNLYNLLKKLGGIAEPLPQLDLSISSLYTLPSFFPQLPTPSFHRRSINLCPKIKKLQLSHDTLHGFLDLVLYALQINEKKTPTRGFPSTLIIHVHSLNLSTAESHDLESTDSELWSEISDAGPDTNTINTAAKLSEPVYAKDIVPPPSDNLPKPQLLKRPIDDSDVRISKRSRGRDLRTPSESNLFSLIASITSDINEQIQKRFPDATSPFSGESMFREYSSIFEDYHQLLVNFPSEGSIPDLDVSTDSAANGAFSKMILIDLAMHSANRLEHMQVPDGYLLQLLSEVNSLNMVPAELATFFVESMLRPRKLEPPFYLQQCWGKIFKKKFTTICERIESTLHELVKASLQTPEVFNISQSLFELFLDDYFLALKFSSNDQKDDNVSEIPTESLEYKKLRCLRWKSLTEQVVELQPSCKSSSQRHLIIRNSWARNLLLRLTGCSSEAIVENFKQLRCLLQENSDSLELLNSQCMADLSVQVVDFELSKLQTVEFFNTLFMNTKNLDFNAVIKNLEPVLSPENKFAEDPQAKFISQFLEKTSTEFQIHLWYLLYQAYSSAHRPYNSLLCAFQSLKIILIRLCSSSFSIQDAGRRQAELLGMLNFSSNLFRIIWQKLHEQPDILSPCNEMTVIDCIRIILIYLRTFAIYVGIDEDISDQRIPKPSNPEFDSYAQTVKDSLMSGWCIFYTLFAHLLHYDFIKADAQKLLPQILTAIHSQYSFRGYCSSSNQSFLELSQTECQRLDAWENENEILQCVCCRFNLIIGSEYYVPQSHQSDSVNLTSNDAIKIIPFILGFAVKRSHGWVMPRSDQKNALEIICKVIRFPGENNADVYFNKCAIKEFLERDISPQLTKMLLKSNDILGLREIGSKVVDDRVRGLYYAQSQVLFGYYRSRLKGSRCINDLLVIIKYFLLDLYLNPRRQDSWYTCSSVFSSLADEELGWSAEQICLADDVINEYRRKAILCNLMALSLPFTQDKLFKANVYFDFAMNLYASARPPLEMAAFLPSETRVFSGASGLYNLSMKPIEVSKVIALAADYFGMSAELSNDWRALYMLGKACRKCGDMENALVHFEAAAALAPTKSGSGSQQALLIEPHYALLSNLSKAAIEGSVEIVQILSYLRRIRHPPKDSGSLLEVKNEDVNIYKRNALLFILKALAEMRILDKQSWHHRPTYRIAKIMEHLGNVQQAKEEMETLFSYKTSGKSLLNIWRTPNERPGRHFYYGATYSRYLLSLFYKTNDKVNFLQFLKRFRRSSSTIYEHRQIWLDIMIKYLEDLRLQHSVKETQINDLPLVEFKYVYKEISLLDEQKLSLLHQVYEIRKLNNGLYPTIKVDDFLIDCFMSLYNEVKSSISPLDANIPNSPSTITAKPLNDEKAINNENSVKQKTVITRKDVVSKVLALFRPHRETYYRETQNKILQKLASTSSSLVRSFTEDSSQAGESPGIHEEIQ</sequence>
<dbReference type="EMBL" id="CU329671">
    <property type="protein sequence ID" value="CAB10090.1"/>
    <property type="molecule type" value="Genomic_DNA"/>
</dbReference>
<dbReference type="PIR" id="T40217">
    <property type="entry name" value="T40217"/>
</dbReference>
<dbReference type="RefSeq" id="NP_596576.1">
    <property type="nucleotide sequence ID" value="NM_001022497.2"/>
</dbReference>
<dbReference type="SMR" id="P87315"/>
<dbReference type="BioGRID" id="276759">
    <property type="interactions" value="11"/>
</dbReference>
<dbReference type="FunCoup" id="P87315">
    <property type="interactions" value="11"/>
</dbReference>
<dbReference type="IntAct" id="P87315">
    <property type="interactions" value="2"/>
</dbReference>
<dbReference type="STRING" id="284812.P87315"/>
<dbReference type="iPTMnet" id="P87315"/>
<dbReference type="PaxDb" id="4896-SPBC31F10.14c.1"/>
<dbReference type="EnsemblFungi" id="SPBC31F10.14c.1">
    <property type="protein sequence ID" value="SPBC31F10.14c.1:pep"/>
    <property type="gene ID" value="SPBC31F10.14c"/>
</dbReference>
<dbReference type="GeneID" id="2540227"/>
<dbReference type="KEGG" id="spo:2540227"/>
<dbReference type="PomBase" id="SPBC31F10.14c">
    <property type="gene designation" value="hip3"/>
</dbReference>
<dbReference type="VEuPathDB" id="FungiDB:SPBC31F10.14c"/>
<dbReference type="eggNOG" id="ENOG502QQX4">
    <property type="taxonomic scope" value="Eukaryota"/>
</dbReference>
<dbReference type="HOGENOM" id="CLU_001419_0_0_1"/>
<dbReference type="InParanoid" id="P87315"/>
<dbReference type="OMA" id="WETWYRL"/>
<dbReference type="PhylomeDB" id="P87315"/>
<dbReference type="PRO" id="PR:P87315"/>
<dbReference type="Proteomes" id="UP000002485">
    <property type="component" value="Chromosome II"/>
</dbReference>
<dbReference type="GO" id="GO:0000417">
    <property type="term" value="C:HIR complex"/>
    <property type="evidence" value="ECO:0000314"/>
    <property type="project" value="PomBase"/>
</dbReference>
<dbReference type="GO" id="GO:0005634">
    <property type="term" value="C:nucleus"/>
    <property type="evidence" value="ECO:0007005"/>
    <property type="project" value="PomBase"/>
</dbReference>
<dbReference type="GO" id="GO:0007059">
    <property type="term" value="P:chromosome segregation"/>
    <property type="evidence" value="ECO:0007669"/>
    <property type="project" value="UniProtKB-KW"/>
</dbReference>
<dbReference type="GO" id="GO:0140673">
    <property type="term" value="P:transcription elongation-coupled chromatin remodeling"/>
    <property type="evidence" value="ECO:0000305"/>
    <property type="project" value="PomBase"/>
</dbReference>
<dbReference type="Gene3D" id="1.25.40.10">
    <property type="entry name" value="Tetratricopeptide repeat domain"/>
    <property type="match status" value="1"/>
</dbReference>
<dbReference type="InterPro" id="IPR033053">
    <property type="entry name" value="Hir3/CABIN1"/>
</dbReference>
<dbReference type="InterPro" id="IPR011990">
    <property type="entry name" value="TPR-like_helical_dom_sf"/>
</dbReference>
<dbReference type="InterPro" id="IPR019734">
    <property type="entry name" value="TPR_rpt"/>
</dbReference>
<dbReference type="PANTHER" id="PTHR15502">
    <property type="entry name" value="CALCINEURIN-BINDING PROTEIN CABIN 1-RELATED"/>
    <property type="match status" value="1"/>
</dbReference>
<dbReference type="PANTHER" id="PTHR15502:SF7">
    <property type="entry name" value="CALCINEURIN-BINDING PROTEIN CABIN-1"/>
    <property type="match status" value="1"/>
</dbReference>
<dbReference type="SMART" id="SM00028">
    <property type="entry name" value="TPR"/>
    <property type="match status" value="1"/>
</dbReference>
<dbReference type="PROSITE" id="PS50005">
    <property type="entry name" value="TPR"/>
    <property type="match status" value="1"/>
</dbReference>
<evidence type="ECO:0000256" key="1">
    <source>
        <dbReference type="SAM" id="MobiDB-lite"/>
    </source>
</evidence>
<evidence type="ECO:0000269" key="2">
    <source>
    </source>
</evidence>
<evidence type="ECO:0000269" key="3">
    <source>
    </source>
</evidence>
<evidence type="ECO:0000305" key="4"/>
<accession>P87315</accession>
<name>HIR3_SCHPO</name>
<proteinExistence type="evidence at protein level"/>
<reference key="1">
    <citation type="journal article" date="2002" name="Nature">
        <title>The genome sequence of Schizosaccharomyces pombe.</title>
        <authorList>
            <person name="Wood V."/>
            <person name="Gwilliam R."/>
            <person name="Rajandream M.A."/>
            <person name="Lyne M.H."/>
            <person name="Lyne R."/>
            <person name="Stewart A."/>
            <person name="Sgouros J.G."/>
            <person name="Peat N."/>
            <person name="Hayles J."/>
            <person name="Baker S.G."/>
            <person name="Basham D."/>
            <person name="Bowman S."/>
            <person name="Brooks K."/>
            <person name="Brown D."/>
            <person name="Brown S."/>
            <person name="Chillingworth T."/>
            <person name="Churcher C.M."/>
            <person name="Collins M."/>
            <person name="Connor R."/>
            <person name="Cronin A."/>
            <person name="Davis P."/>
            <person name="Feltwell T."/>
            <person name="Fraser A."/>
            <person name="Gentles S."/>
            <person name="Goble A."/>
            <person name="Hamlin N."/>
            <person name="Harris D.E."/>
            <person name="Hidalgo J."/>
            <person name="Hodgson G."/>
            <person name="Holroyd S."/>
            <person name="Hornsby T."/>
            <person name="Howarth S."/>
            <person name="Huckle E.J."/>
            <person name="Hunt S."/>
            <person name="Jagels K."/>
            <person name="James K.D."/>
            <person name="Jones L."/>
            <person name="Jones M."/>
            <person name="Leather S."/>
            <person name="McDonald S."/>
            <person name="McLean J."/>
            <person name="Mooney P."/>
            <person name="Moule S."/>
            <person name="Mungall K.L."/>
            <person name="Murphy L.D."/>
            <person name="Niblett D."/>
            <person name="Odell C."/>
            <person name="Oliver K."/>
            <person name="O'Neil S."/>
            <person name="Pearson D."/>
            <person name="Quail M.A."/>
            <person name="Rabbinowitsch E."/>
            <person name="Rutherford K.M."/>
            <person name="Rutter S."/>
            <person name="Saunders D."/>
            <person name="Seeger K."/>
            <person name="Sharp S."/>
            <person name="Skelton J."/>
            <person name="Simmonds M.N."/>
            <person name="Squares R."/>
            <person name="Squares S."/>
            <person name="Stevens K."/>
            <person name="Taylor K."/>
            <person name="Taylor R.G."/>
            <person name="Tivey A."/>
            <person name="Walsh S.V."/>
            <person name="Warren T."/>
            <person name="Whitehead S."/>
            <person name="Woodward J.R."/>
            <person name="Volckaert G."/>
            <person name="Aert R."/>
            <person name="Robben J."/>
            <person name="Grymonprez B."/>
            <person name="Weltjens I."/>
            <person name="Vanstreels E."/>
            <person name="Rieger M."/>
            <person name="Schaefer M."/>
            <person name="Mueller-Auer S."/>
            <person name="Gabel C."/>
            <person name="Fuchs M."/>
            <person name="Duesterhoeft A."/>
            <person name="Fritzc C."/>
            <person name="Holzer E."/>
            <person name="Moestl D."/>
            <person name="Hilbert H."/>
            <person name="Borzym K."/>
            <person name="Langer I."/>
            <person name="Beck A."/>
            <person name="Lehrach H."/>
            <person name="Reinhardt R."/>
            <person name="Pohl T.M."/>
            <person name="Eger P."/>
            <person name="Zimmermann W."/>
            <person name="Wedler H."/>
            <person name="Wambutt R."/>
            <person name="Purnelle B."/>
            <person name="Goffeau A."/>
            <person name="Cadieu E."/>
            <person name="Dreano S."/>
            <person name="Gloux S."/>
            <person name="Lelaure V."/>
            <person name="Mottier S."/>
            <person name="Galibert F."/>
            <person name="Aves S.J."/>
            <person name="Xiang Z."/>
            <person name="Hunt C."/>
            <person name="Moore K."/>
            <person name="Hurst S.M."/>
            <person name="Lucas M."/>
            <person name="Rochet M."/>
            <person name="Gaillardin C."/>
            <person name="Tallada V.A."/>
            <person name="Garzon A."/>
            <person name="Thode G."/>
            <person name="Daga R.R."/>
            <person name="Cruzado L."/>
            <person name="Jimenez J."/>
            <person name="Sanchez M."/>
            <person name="del Rey F."/>
            <person name="Benito J."/>
            <person name="Dominguez A."/>
            <person name="Revuelta J.L."/>
            <person name="Moreno S."/>
            <person name="Armstrong J."/>
            <person name="Forsburg S.L."/>
            <person name="Cerutti L."/>
            <person name="Lowe T."/>
            <person name="McCombie W.R."/>
            <person name="Paulsen I."/>
            <person name="Potashkin J."/>
            <person name="Shpakovski G.V."/>
            <person name="Ussery D."/>
            <person name="Barrell B.G."/>
            <person name="Nurse P."/>
        </authorList>
    </citation>
    <scope>NUCLEOTIDE SEQUENCE [LARGE SCALE GENOMIC DNA]</scope>
    <source>
        <strain>972 / ATCC 24843</strain>
    </source>
</reference>
<reference key="2">
    <citation type="journal article" date="2006" name="J. Biol. Chem.">
        <title>Hip3 interacts with the HIRA proteins Hip1 and Slm9 and is required for transcriptional silencing and accurate chromosome segregation.</title>
        <authorList>
            <person name="Greenall A."/>
            <person name="Williams E.S."/>
            <person name="Martin K.A."/>
            <person name="Palmer J.M."/>
            <person name="Gray J."/>
            <person name="Liu C."/>
            <person name="Whitehall S.K."/>
        </authorList>
    </citation>
    <scope>FUNCTION</scope>
    <scope>INTERACTION WITH HIP1 AND SLM9</scope>
</reference>
<reference key="3">
    <citation type="journal article" date="2006" name="Nat. Biotechnol.">
        <title>ORFeome cloning and global analysis of protein localization in the fission yeast Schizosaccharomyces pombe.</title>
        <authorList>
            <person name="Matsuyama A."/>
            <person name="Arai R."/>
            <person name="Yashiroda Y."/>
            <person name="Shirai A."/>
            <person name="Kamata A."/>
            <person name="Sekido S."/>
            <person name="Kobayashi Y."/>
            <person name="Hashimoto A."/>
            <person name="Hamamoto M."/>
            <person name="Hiraoka Y."/>
            <person name="Horinouchi S."/>
            <person name="Yoshida M."/>
        </authorList>
    </citation>
    <scope>SUBCELLULAR LOCATION [LARGE SCALE ANALYSIS]</scope>
</reference>
<feature type="chain" id="PRO_0000256203" description="Histone transcription regulator 3 homolog">
    <location>
        <begin position="1"/>
        <end position="1630"/>
    </location>
</feature>
<feature type="repeat" description="TPR 1">
    <location>
        <begin position="8"/>
        <end position="42"/>
    </location>
</feature>
<feature type="repeat" description="TPR 2">
    <location>
        <begin position="1230"/>
        <end position="1263"/>
    </location>
</feature>
<feature type="region of interest" description="Disordered" evidence="1">
    <location>
        <begin position="325"/>
        <end position="347"/>
    </location>
</feature>
<protein>
    <recommendedName>
        <fullName>Histone transcription regulator 3 homolog</fullName>
    </recommendedName>
</protein>